<evidence type="ECO:0000250" key="1"/>
<evidence type="ECO:0000305" key="2"/>
<dbReference type="EMBL" id="DP000788">
    <property type="protein sequence ID" value="ACE79048.1"/>
    <property type="molecule type" value="Genomic_DNA"/>
</dbReference>
<dbReference type="SMR" id="B3RFC3"/>
<dbReference type="MEROPS" id="I04.015"/>
<dbReference type="GO" id="GO:0005737">
    <property type="term" value="C:cytoplasm"/>
    <property type="evidence" value="ECO:0007669"/>
    <property type="project" value="UniProtKB-SubCell"/>
</dbReference>
<dbReference type="GO" id="GO:0005615">
    <property type="term" value="C:extracellular space"/>
    <property type="evidence" value="ECO:0007669"/>
    <property type="project" value="InterPro"/>
</dbReference>
<dbReference type="GO" id="GO:0005634">
    <property type="term" value="C:nucleus"/>
    <property type="evidence" value="ECO:0007669"/>
    <property type="project" value="UniProtKB-SubCell"/>
</dbReference>
<dbReference type="GO" id="GO:0004867">
    <property type="term" value="F:serine-type endopeptidase inhibitor activity"/>
    <property type="evidence" value="ECO:0007669"/>
    <property type="project" value="UniProtKB-KW"/>
</dbReference>
<dbReference type="CDD" id="cd19569">
    <property type="entry name" value="serpinB10_bomapin"/>
    <property type="match status" value="1"/>
</dbReference>
<dbReference type="FunFam" id="3.30.497.10:FF:000004">
    <property type="entry name" value="Serpin family B member 1"/>
    <property type="match status" value="1"/>
</dbReference>
<dbReference type="FunFam" id="2.30.39.10:FF:000001">
    <property type="entry name" value="Serpin family B member 2"/>
    <property type="match status" value="1"/>
</dbReference>
<dbReference type="Gene3D" id="2.30.39.10">
    <property type="entry name" value="Alpha-1-antitrypsin, domain 1"/>
    <property type="match status" value="1"/>
</dbReference>
<dbReference type="Gene3D" id="3.30.497.10">
    <property type="entry name" value="Antithrombin, subunit I, domain 2"/>
    <property type="match status" value="1"/>
</dbReference>
<dbReference type="InterPro" id="IPR023795">
    <property type="entry name" value="Serpin_CS"/>
</dbReference>
<dbReference type="InterPro" id="IPR023796">
    <property type="entry name" value="Serpin_dom"/>
</dbReference>
<dbReference type="InterPro" id="IPR000215">
    <property type="entry name" value="Serpin_fam"/>
</dbReference>
<dbReference type="InterPro" id="IPR036186">
    <property type="entry name" value="Serpin_sf"/>
</dbReference>
<dbReference type="InterPro" id="IPR042178">
    <property type="entry name" value="Serpin_sf_1"/>
</dbReference>
<dbReference type="InterPro" id="IPR042185">
    <property type="entry name" value="Serpin_sf_2"/>
</dbReference>
<dbReference type="PANTHER" id="PTHR11461">
    <property type="entry name" value="SERINE PROTEASE INHIBITOR, SERPIN"/>
    <property type="match status" value="1"/>
</dbReference>
<dbReference type="PANTHER" id="PTHR11461:SF175">
    <property type="entry name" value="SERPIN B10"/>
    <property type="match status" value="1"/>
</dbReference>
<dbReference type="Pfam" id="PF00079">
    <property type="entry name" value="Serpin"/>
    <property type="match status" value="1"/>
</dbReference>
<dbReference type="SMART" id="SM00093">
    <property type="entry name" value="SERPIN"/>
    <property type="match status" value="1"/>
</dbReference>
<dbReference type="SUPFAM" id="SSF56574">
    <property type="entry name" value="Serpins"/>
    <property type="match status" value="1"/>
</dbReference>
<dbReference type="PROSITE" id="PS00284">
    <property type="entry name" value="SERPIN"/>
    <property type="match status" value="1"/>
</dbReference>
<feature type="chain" id="PRO_0000355550" description="Serpin B10">
    <location>
        <begin position="1"/>
        <end position="397"/>
    </location>
</feature>
<feature type="short sequence motif" description="Nuclear localization signal" evidence="1">
    <location>
        <begin position="74"/>
        <end position="77"/>
    </location>
</feature>
<feature type="site" description="Reactive bond" evidence="1">
    <location>
        <begin position="362"/>
        <end position="363"/>
    </location>
</feature>
<name>SPB10_SORAR</name>
<organism>
    <name type="scientific">Sorex araneus</name>
    <name type="common">Eurasian common shrew</name>
    <name type="synonym">European shrew</name>
    <dbReference type="NCBI Taxonomy" id="42254"/>
    <lineage>
        <taxon>Eukaryota</taxon>
        <taxon>Metazoa</taxon>
        <taxon>Chordata</taxon>
        <taxon>Craniata</taxon>
        <taxon>Vertebrata</taxon>
        <taxon>Euteleostomi</taxon>
        <taxon>Mammalia</taxon>
        <taxon>Eutheria</taxon>
        <taxon>Laurasiatheria</taxon>
        <taxon>Eulipotyphla</taxon>
        <taxon>Soricidae</taxon>
        <taxon>Soricinae</taxon>
        <taxon>Sorex</taxon>
    </lineage>
</organism>
<protein>
    <recommendedName>
        <fullName>Serpin B10</fullName>
    </recommendedName>
</protein>
<keyword id="KW-0963">Cytoplasm</keyword>
<keyword id="KW-0539">Nucleus</keyword>
<keyword id="KW-0646">Protease inhibitor</keyword>
<keyword id="KW-0722">Serine protease inhibitor</keyword>
<reference key="1">
    <citation type="submission" date="2008-06" db="EMBL/GenBank/DDBJ databases">
        <title>NISC comparative sequencing initiative.</title>
        <authorList>
            <person name="Antonellis A."/>
            <person name="Ayele K."/>
            <person name="Benjamin B."/>
            <person name="Blakesley R.W."/>
            <person name="Boakye A."/>
            <person name="Bouffard G.G."/>
            <person name="Brinkley C."/>
            <person name="Brooks S."/>
            <person name="Chu G."/>
            <person name="Coleman H."/>
            <person name="Engle J."/>
            <person name="Gestole M."/>
            <person name="Greene A."/>
            <person name="Guan X."/>
            <person name="Gupta J."/>
            <person name="Haghighi P."/>
            <person name="Han J."/>
            <person name="Hansen N."/>
            <person name="Ho S.-L."/>
            <person name="Hu P."/>
            <person name="Hunter G."/>
            <person name="Hurle B."/>
            <person name="Idol J.R."/>
            <person name="Kwong P."/>
            <person name="Laric P."/>
            <person name="Larson S."/>
            <person name="Lee-Lin S.-Q."/>
            <person name="Legaspi R."/>
            <person name="Madden M."/>
            <person name="Maduro Q.L."/>
            <person name="Maduro V.B."/>
            <person name="Margulies E.H."/>
            <person name="Masiello C."/>
            <person name="Maskeri B."/>
            <person name="McDowell J."/>
            <person name="Mojidi H.A."/>
            <person name="Mullikin J.C."/>
            <person name="Oestreicher J.S."/>
            <person name="Park M."/>
            <person name="Portnoy M.E."/>
            <person name="Prasad A."/>
            <person name="Puri O."/>
            <person name="Reddix-Dugue N."/>
            <person name="Schandler K."/>
            <person name="Schueler M.G."/>
            <person name="Sison C."/>
            <person name="Stantripop S."/>
            <person name="Stephen E."/>
            <person name="Taye A."/>
            <person name="Thomas J.W."/>
            <person name="Thomas P.J."/>
            <person name="Tsipouri V."/>
            <person name="Ung L."/>
            <person name="Vogt J.L."/>
            <person name="Wetherby K.D."/>
            <person name="Young A."/>
            <person name="Green E.D."/>
        </authorList>
    </citation>
    <scope>NUCLEOTIDE SEQUENCE [LARGE SCALE GENOMIC DNA]</scope>
</reference>
<proteinExistence type="inferred from homology"/>
<accession>B3RFC3</accession>
<sequence>MDSLANSINQFALEFSKKLAETDEGKNIFFSPWGISTTLAMVYLGTKGTTATQMAQVLQFDTDQDVKSSPENEKKRKVDLNSDQVGEIHFGFQKLISEINNPSNTYVLKTANGIYGEKTYPFHNKYIEDIKTYFGAKPQSVNFVEDSDQIRKDINSWVESQTEGKIPNLLPDDAVDSATKMVLVNALYFKGLWEHQFSVQDTTEKPFRINKTSSKPVQMMSMKKNLEVFHIEKPQATGLRLDYKNRDLSLLLILPEDVCGLDQLEKAITYDQLSEWTSEDMMEMYTVELHLPKFKLEQSYDLKTTLASMGMSDAFNQSKADFSGMSDERNLYLSNVFHKSFVEINEQGTEAAAGSASEISVRIKLPTIEINADHPFIFFIRHNKTNSILFYGRFCSP</sequence>
<gene>
    <name type="primary">SERPINB10</name>
</gene>
<comment type="function">
    <text evidence="1">Protease inhibitor that may play a role in the regulation of protease activities during hematopoiesis and apoptosis induced by TNF. May regulate protease activities in the cytoplasm and in the nucleus (By similarity).</text>
</comment>
<comment type="subcellular location">
    <subcellularLocation>
        <location evidence="1">Nucleus</location>
    </subcellularLocation>
    <subcellularLocation>
        <location evidence="1">Cytoplasm</location>
    </subcellularLocation>
</comment>
<comment type="similarity">
    <text evidence="2">Belongs to the serpin family. Ov-serpin subfamily.</text>
</comment>